<keyword id="KW-0378">Hydrolase</keyword>
<keyword id="KW-0460">Magnesium</keyword>
<keyword id="KW-0479">Metal-binding</keyword>
<keyword id="KW-0546">Nucleotide metabolism</keyword>
<keyword id="KW-1185">Reference proteome</keyword>
<name>DUT_HHV2H</name>
<evidence type="ECO:0000255" key="1">
    <source>
        <dbReference type="HAMAP-Rule" id="MF_04031"/>
    </source>
</evidence>
<gene>
    <name evidence="1" type="primary">DUT</name>
    <name type="ordered locus">UL50</name>
</gene>
<dbReference type="EC" id="3.6.1.23" evidence="1"/>
<dbReference type="EMBL" id="Z86099">
    <property type="protein sequence ID" value="CAB06737.1"/>
    <property type="molecule type" value="Genomic_DNA"/>
</dbReference>
<dbReference type="RefSeq" id="YP_009137203.1">
    <property type="nucleotide sequence ID" value="NC_001798.2"/>
</dbReference>
<dbReference type="DNASU" id="1487339"/>
<dbReference type="GeneID" id="1487339"/>
<dbReference type="KEGG" id="vg:1487339"/>
<dbReference type="Proteomes" id="UP000001874">
    <property type="component" value="Segment"/>
</dbReference>
<dbReference type="GO" id="GO:0004170">
    <property type="term" value="F:dUTP diphosphatase activity"/>
    <property type="evidence" value="ECO:0007669"/>
    <property type="project" value="UniProtKB-EC"/>
</dbReference>
<dbReference type="GO" id="GO:0046872">
    <property type="term" value="F:metal ion binding"/>
    <property type="evidence" value="ECO:0007669"/>
    <property type="project" value="UniProtKB-KW"/>
</dbReference>
<dbReference type="GO" id="GO:0046080">
    <property type="term" value="P:dUTP metabolic process"/>
    <property type="evidence" value="ECO:0007669"/>
    <property type="project" value="InterPro"/>
</dbReference>
<dbReference type="Gene3D" id="2.70.40.10">
    <property type="match status" value="2"/>
</dbReference>
<dbReference type="HAMAP" id="MF_04031">
    <property type="entry name" value="HSV_DUT"/>
    <property type="match status" value="1"/>
</dbReference>
<dbReference type="InterPro" id="IPR029054">
    <property type="entry name" value="dUTPase-like"/>
</dbReference>
<dbReference type="InterPro" id="IPR036157">
    <property type="entry name" value="dUTPase-like_sf"/>
</dbReference>
<dbReference type="InterPro" id="IPR034745">
    <property type="entry name" value="HSV_DUT"/>
</dbReference>
<dbReference type="Pfam" id="PF00692">
    <property type="entry name" value="dUTPase"/>
    <property type="match status" value="1"/>
</dbReference>
<dbReference type="SUPFAM" id="SSF51283">
    <property type="entry name" value="dUTPase-like"/>
    <property type="match status" value="1"/>
</dbReference>
<comment type="function">
    <text evidence="1">Involved in nucleotide metabolism: produces dUMP, the immediate precursor of thymidine nucleotides and decreases the intracellular concentration of dUTP to avoid uracil incorporation into viral DNA.</text>
</comment>
<comment type="catalytic activity">
    <reaction evidence="1">
        <text>dUTP + H2O = dUMP + diphosphate + H(+)</text>
        <dbReference type="Rhea" id="RHEA:10248"/>
        <dbReference type="ChEBI" id="CHEBI:15377"/>
        <dbReference type="ChEBI" id="CHEBI:15378"/>
        <dbReference type="ChEBI" id="CHEBI:33019"/>
        <dbReference type="ChEBI" id="CHEBI:61555"/>
        <dbReference type="ChEBI" id="CHEBI:246422"/>
        <dbReference type="EC" id="3.6.1.23"/>
    </reaction>
</comment>
<comment type="cofactor">
    <cofactor evidence="1">
        <name>Mg(2+)</name>
        <dbReference type="ChEBI" id="CHEBI:18420"/>
    </cofactor>
</comment>
<comment type="similarity">
    <text evidence="1">Belongs to the dUTPase family.</text>
</comment>
<sequence>MSQWGPRAILVQTDSTNRNADGDWQAAVAIRGGGVVQLNMVNKRAVDFTPAECGDSEWAVGRVSLGLRMAMPRDFCAIIHAPAVSGPGPHVMLGLVDSGYRGTVLAVVVAPNGTRGFAPGALRVDVTFLDIRATPPTLTEPSSLHRFPQLAPSPLAGLREDPWLDGALATAGGAVALPARRRGGSLVYAGELTQVTTEHGDCVHEAPAFLPKREEDAGFDILIHRAVTVPANGATVIQPSLRVLRAADGPEACYVLGRSSLNARGLLVMPTRWPSGHACAFVVCNLTGVPVTLQAGSKVAQLLVAGTHALPWIPPDNIHEDGAFRAYPRGVPDATATPRDPPILVFTNEFDADAPPSKRGAGGFGSTGI</sequence>
<organismHost>
    <name type="scientific">Homo sapiens</name>
    <name type="common">Human</name>
    <dbReference type="NCBI Taxonomy" id="9606"/>
</organismHost>
<organism>
    <name type="scientific">Human herpesvirus 2 (strain HG52)</name>
    <name type="common">HHV-2</name>
    <name type="synonym">Human herpes simplex virus 2</name>
    <dbReference type="NCBI Taxonomy" id="10315"/>
    <lineage>
        <taxon>Viruses</taxon>
        <taxon>Duplodnaviria</taxon>
        <taxon>Heunggongvirae</taxon>
        <taxon>Peploviricota</taxon>
        <taxon>Herviviricetes</taxon>
        <taxon>Herpesvirales</taxon>
        <taxon>Orthoherpesviridae</taxon>
        <taxon>Alphaherpesvirinae</taxon>
        <taxon>Simplexvirus</taxon>
        <taxon>Simplexvirus humanalpha2</taxon>
        <taxon>Human herpesvirus 2</taxon>
    </lineage>
</organism>
<accession>P89469</accession>
<reference key="1">
    <citation type="journal article" date="1998" name="J. Virol.">
        <title>The genome sequence of herpes simplex virus type 2.</title>
        <authorList>
            <person name="Dolan A."/>
            <person name="Jamieson F.E."/>
            <person name="Cunningham C."/>
            <person name="Barnett B.C."/>
            <person name="McGeoch D.J."/>
        </authorList>
    </citation>
    <scope>NUCLEOTIDE SEQUENCE [LARGE SCALE GENOMIC DNA]</scope>
</reference>
<protein>
    <recommendedName>
        <fullName evidence="1">Deoxyuridine 5'-triphosphate nucleotidohydrolase</fullName>
        <shortName evidence="1">dUTPase</shortName>
        <ecNumber evidence="1">3.6.1.23</ecNumber>
    </recommendedName>
    <alternativeName>
        <fullName evidence="1">dUTP pyrophosphatase</fullName>
    </alternativeName>
</protein>
<proteinExistence type="inferred from homology"/>
<feature type="chain" id="PRO_0000385167" description="Deoxyuridine 5'-triphosphate nucleotidohydrolase">
    <location>
        <begin position="1"/>
        <end position="369"/>
    </location>
</feature>
<feature type="binding site" evidence="1">
    <location>
        <begin position="258"/>
        <end position="260"/>
    </location>
    <ligand>
        <name>substrate</name>
    </ligand>
</feature>
<feature type="binding site" evidence="1">
    <location>
        <begin position="364"/>
        <end position="365"/>
    </location>
    <ligand>
        <name>substrate</name>
    </ligand>
</feature>